<organism>
    <name type="scientific">Vibrio cholerae serotype O1 (strain M66-2)</name>
    <dbReference type="NCBI Taxonomy" id="579112"/>
    <lineage>
        <taxon>Bacteria</taxon>
        <taxon>Pseudomonadati</taxon>
        <taxon>Pseudomonadota</taxon>
        <taxon>Gammaproteobacteria</taxon>
        <taxon>Vibrionales</taxon>
        <taxon>Vibrionaceae</taxon>
        <taxon>Vibrio</taxon>
    </lineage>
</organism>
<dbReference type="EMBL" id="CP001233">
    <property type="protein sequence ID" value="ACP05416.1"/>
    <property type="molecule type" value="Genomic_DNA"/>
</dbReference>
<dbReference type="RefSeq" id="WP_000041728.1">
    <property type="nucleotide sequence ID" value="NC_012578.1"/>
</dbReference>
<dbReference type="SMR" id="C3LLJ0"/>
<dbReference type="GeneID" id="89514115"/>
<dbReference type="KEGG" id="vcm:VCM66_1099"/>
<dbReference type="HOGENOM" id="CLU_134358_2_1_6"/>
<dbReference type="Proteomes" id="UP000001217">
    <property type="component" value="Chromosome I"/>
</dbReference>
<dbReference type="GO" id="GO:0030163">
    <property type="term" value="P:protein catabolic process"/>
    <property type="evidence" value="ECO:0007669"/>
    <property type="project" value="InterPro"/>
</dbReference>
<dbReference type="GO" id="GO:0006508">
    <property type="term" value="P:proteolysis"/>
    <property type="evidence" value="ECO:0007669"/>
    <property type="project" value="UniProtKB-UniRule"/>
</dbReference>
<dbReference type="FunFam" id="3.30.1390.10:FF:000002">
    <property type="entry name" value="ATP-dependent Clp protease adapter protein ClpS"/>
    <property type="match status" value="1"/>
</dbReference>
<dbReference type="Gene3D" id="3.30.1390.10">
    <property type="match status" value="1"/>
</dbReference>
<dbReference type="HAMAP" id="MF_00302">
    <property type="entry name" value="ClpS"/>
    <property type="match status" value="1"/>
</dbReference>
<dbReference type="InterPro" id="IPR022935">
    <property type="entry name" value="ClpS"/>
</dbReference>
<dbReference type="InterPro" id="IPR003769">
    <property type="entry name" value="ClpS_core"/>
</dbReference>
<dbReference type="InterPro" id="IPR014719">
    <property type="entry name" value="Ribosomal_bL12_C/ClpS-like"/>
</dbReference>
<dbReference type="NCBIfam" id="NF000670">
    <property type="entry name" value="PRK00033.1-3"/>
    <property type="match status" value="1"/>
</dbReference>
<dbReference type="NCBIfam" id="NF000672">
    <property type="entry name" value="PRK00033.1-5"/>
    <property type="match status" value="1"/>
</dbReference>
<dbReference type="PANTHER" id="PTHR33473:SF19">
    <property type="entry name" value="ATP-DEPENDENT CLP PROTEASE ADAPTER PROTEIN CLPS"/>
    <property type="match status" value="1"/>
</dbReference>
<dbReference type="PANTHER" id="PTHR33473">
    <property type="entry name" value="ATP-DEPENDENT CLP PROTEASE ADAPTER PROTEIN CLPS1, CHLOROPLASTIC"/>
    <property type="match status" value="1"/>
</dbReference>
<dbReference type="Pfam" id="PF02617">
    <property type="entry name" value="ClpS"/>
    <property type="match status" value="1"/>
</dbReference>
<dbReference type="SUPFAM" id="SSF54736">
    <property type="entry name" value="ClpS-like"/>
    <property type="match status" value="1"/>
</dbReference>
<evidence type="ECO:0000255" key="1">
    <source>
        <dbReference type="HAMAP-Rule" id="MF_00302"/>
    </source>
</evidence>
<feature type="chain" id="PRO_1000132817" description="ATP-dependent Clp protease adapter protein ClpS">
    <location>
        <begin position="1"/>
        <end position="106"/>
    </location>
</feature>
<sequence>MSKNFEWISPDFDLLEKEKTAVKPPSMYHVVLNNDDYTPMDFVIEILERFFSMDIERATQVMLKVHYEGKAICGTFTAEVAETKVAQVTMYSRENEHPLLCTMEQA</sequence>
<accession>C3LLJ0</accession>
<gene>
    <name evidence="1" type="primary">clpS</name>
    <name type="ordered locus">VCM66_1099</name>
</gene>
<reference key="1">
    <citation type="journal article" date="2008" name="PLoS ONE">
        <title>A recalibrated molecular clock and independent origins for the cholera pandemic clones.</title>
        <authorList>
            <person name="Feng L."/>
            <person name="Reeves P.R."/>
            <person name="Lan R."/>
            <person name="Ren Y."/>
            <person name="Gao C."/>
            <person name="Zhou Z."/>
            <person name="Ren Y."/>
            <person name="Cheng J."/>
            <person name="Wang W."/>
            <person name="Wang J."/>
            <person name="Qian W."/>
            <person name="Li D."/>
            <person name="Wang L."/>
        </authorList>
    </citation>
    <scope>NUCLEOTIDE SEQUENCE [LARGE SCALE GENOMIC DNA]</scope>
    <source>
        <strain>M66-2</strain>
    </source>
</reference>
<protein>
    <recommendedName>
        <fullName evidence="1">ATP-dependent Clp protease adapter protein ClpS</fullName>
    </recommendedName>
</protein>
<comment type="function">
    <text evidence="1">Involved in the modulation of the specificity of the ClpAP-mediated ATP-dependent protein degradation.</text>
</comment>
<comment type="subunit">
    <text evidence="1">Binds to the N-terminal domain of the chaperone ClpA.</text>
</comment>
<comment type="similarity">
    <text evidence="1">Belongs to the ClpS family.</text>
</comment>
<proteinExistence type="inferred from homology"/>
<name>CLPS_VIBCM</name>